<reference key="1">
    <citation type="journal article" date="1997" name="J. Exp. Med.">
        <title>TRAF-interacting protein (TRIP): a novel component of the tumor necrosis factor receptor (TNFR)- and CD30-TRAF signaling complexes that inhibits TRAF2-mediated NF-kappaB activation.</title>
        <authorList>
            <person name="Lee S.Y."/>
            <person name="Lee S.Y."/>
            <person name="Choi Y."/>
        </authorList>
    </citation>
    <scope>NUCLEOTIDE SEQUENCE [MRNA] (ISOFORM 1)</scope>
    <scope>INTERACTION WITH TRAF1 AND TRAF2</scope>
    <scope>TISSUE SPECIFICITY</scope>
    <source>
        <tissue>Thymocyte</tissue>
    </source>
</reference>
<reference key="2">
    <citation type="journal article" date="2005" name="Science">
        <title>The transcriptional landscape of the mammalian genome.</title>
        <authorList>
            <person name="Carninci P."/>
            <person name="Kasukawa T."/>
            <person name="Katayama S."/>
            <person name="Gough J."/>
            <person name="Frith M.C."/>
            <person name="Maeda N."/>
            <person name="Oyama R."/>
            <person name="Ravasi T."/>
            <person name="Lenhard B."/>
            <person name="Wells C."/>
            <person name="Kodzius R."/>
            <person name="Shimokawa K."/>
            <person name="Bajic V.B."/>
            <person name="Brenner S.E."/>
            <person name="Batalov S."/>
            <person name="Forrest A.R."/>
            <person name="Zavolan M."/>
            <person name="Davis M.J."/>
            <person name="Wilming L.G."/>
            <person name="Aidinis V."/>
            <person name="Allen J.E."/>
            <person name="Ambesi-Impiombato A."/>
            <person name="Apweiler R."/>
            <person name="Aturaliya R.N."/>
            <person name="Bailey T.L."/>
            <person name="Bansal M."/>
            <person name="Baxter L."/>
            <person name="Beisel K.W."/>
            <person name="Bersano T."/>
            <person name="Bono H."/>
            <person name="Chalk A.M."/>
            <person name="Chiu K.P."/>
            <person name="Choudhary V."/>
            <person name="Christoffels A."/>
            <person name="Clutterbuck D.R."/>
            <person name="Crowe M.L."/>
            <person name="Dalla E."/>
            <person name="Dalrymple B.P."/>
            <person name="de Bono B."/>
            <person name="Della Gatta G."/>
            <person name="di Bernardo D."/>
            <person name="Down T."/>
            <person name="Engstrom P."/>
            <person name="Fagiolini M."/>
            <person name="Faulkner G."/>
            <person name="Fletcher C.F."/>
            <person name="Fukushima T."/>
            <person name="Furuno M."/>
            <person name="Futaki S."/>
            <person name="Gariboldi M."/>
            <person name="Georgii-Hemming P."/>
            <person name="Gingeras T.R."/>
            <person name="Gojobori T."/>
            <person name="Green R.E."/>
            <person name="Gustincich S."/>
            <person name="Harbers M."/>
            <person name="Hayashi Y."/>
            <person name="Hensch T.K."/>
            <person name="Hirokawa N."/>
            <person name="Hill D."/>
            <person name="Huminiecki L."/>
            <person name="Iacono M."/>
            <person name="Ikeo K."/>
            <person name="Iwama A."/>
            <person name="Ishikawa T."/>
            <person name="Jakt M."/>
            <person name="Kanapin A."/>
            <person name="Katoh M."/>
            <person name="Kawasawa Y."/>
            <person name="Kelso J."/>
            <person name="Kitamura H."/>
            <person name="Kitano H."/>
            <person name="Kollias G."/>
            <person name="Krishnan S.P."/>
            <person name="Kruger A."/>
            <person name="Kummerfeld S.K."/>
            <person name="Kurochkin I.V."/>
            <person name="Lareau L.F."/>
            <person name="Lazarevic D."/>
            <person name="Lipovich L."/>
            <person name="Liu J."/>
            <person name="Liuni S."/>
            <person name="McWilliam S."/>
            <person name="Madan Babu M."/>
            <person name="Madera M."/>
            <person name="Marchionni L."/>
            <person name="Matsuda H."/>
            <person name="Matsuzawa S."/>
            <person name="Miki H."/>
            <person name="Mignone F."/>
            <person name="Miyake S."/>
            <person name="Morris K."/>
            <person name="Mottagui-Tabar S."/>
            <person name="Mulder N."/>
            <person name="Nakano N."/>
            <person name="Nakauchi H."/>
            <person name="Ng P."/>
            <person name="Nilsson R."/>
            <person name="Nishiguchi S."/>
            <person name="Nishikawa S."/>
            <person name="Nori F."/>
            <person name="Ohara O."/>
            <person name="Okazaki Y."/>
            <person name="Orlando V."/>
            <person name="Pang K.C."/>
            <person name="Pavan W.J."/>
            <person name="Pavesi G."/>
            <person name="Pesole G."/>
            <person name="Petrovsky N."/>
            <person name="Piazza S."/>
            <person name="Reed J."/>
            <person name="Reid J.F."/>
            <person name="Ring B.Z."/>
            <person name="Ringwald M."/>
            <person name="Rost B."/>
            <person name="Ruan Y."/>
            <person name="Salzberg S.L."/>
            <person name="Sandelin A."/>
            <person name="Schneider C."/>
            <person name="Schoenbach C."/>
            <person name="Sekiguchi K."/>
            <person name="Semple C.A."/>
            <person name="Seno S."/>
            <person name="Sessa L."/>
            <person name="Sheng Y."/>
            <person name="Shibata Y."/>
            <person name="Shimada H."/>
            <person name="Shimada K."/>
            <person name="Silva D."/>
            <person name="Sinclair B."/>
            <person name="Sperling S."/>
            <person name="Stupka E."/>
            <person name="Sugiura K."/>
            <person name="Sultana R."/>
            <person name="Takenaka Y."/>
            <person name="Taki K."/>
            <person name="Tammoja K."/>
            <person name="Tan S.L."/>
            <person name="Tang S."/>
            <person name="Taylor M.S."/>
            <person name="Tegner J."/>
            <person name="Teichmann S.A."/>
            <person name="Ueda H.R."/>
            <person name="van Nimwegen E."/>
            <person name="Verardo R."/>
            <person name="Wei C.L."/>
            <person name="Yagi K."/>
            <person name="Yamanishi H."/>
            <person name="Zabarovsky E."/>
            <person name="Zhu S."/>
            <person name="Zimmer A."/>
            <person name="Hide W."/>
            <person name="Bult C."/>
            <person name="Grimmond S.M."/>
            <person name="Teasdale R.D."/>
            <person name="Liu E.T."/>
            <person name="Brusic V."/>
            <person name="Quackenbush J."/>
            <person name="Wahlestedt C."/>
            <person name="Mattick J.S."/>
            <person name="Hume D.A."/>
            <person name="Kai C."/>
            <person name="Sasaki D."/>
            <person name="Tomaru Y."/>
            <person name="Fukuda S."/>
            <person name="Kanamori-Katayama M."/>
            <person name="Suzuki M."/>
            <person name="Aoki J."/>
            <person name="Arakawa T."/>
            <person name="Iida J."/>
            <person name="Imamura K."/>
            <person name="Itoh M."/>
            <person name="Kato T."/>
            <person name="Kawaji H."/>
            <person name="Kawagashira N."/>
            <person name="Kawashima T."/>
            <person name="Kojima M."/>
            <person name="Kondo S."/>
            <person name="Konno H."/>
            <person name="Nakano K."/>
            <person name="Ninomiya N."/>
            <person name="Nishio T."/>
            <person name="Okada M."/>
            <person name="Plessy C."/>
            <person name="Shibata K."/>
            <person name="Shiraki T."/>
            <person name="Suzuki S."/>
            <person name="Tagami M."/>
            <person name="Waki K."/>
            <person name="Watahiki A."/>
            <person name="Okamura-Oho Y."/>
            <person name="Suzuki H."/>
            <person name="Kawai J."/>
            <person name="Hayashizaki Y."/>
        </authorList>
    </citation>
    <scope>NUCLEOTIDE SEQUENCE [LARGE SCALE MRNA] (ISOFORM 1)</scope>
    <source>
        <strain>C57BL/6J</strain>
        <tissue>Embryo</tissue>
    </source>
</reference>
<reference key="3">
    <citation type="journal article" date="2004" name="Genome Res.">
        <title>The status, quality, and expansion of the NIH full-length cDNA project: the Mammalian Gene Collection (MGC).</title>
        <authorList>
            <consortium name="The MGC Project Team"/>
        </authorList>
    </citation>
    <scope>NUCLEOTIDE SEQUENCE [LARGE SCALE MRNA] (ISOFORMS 1 AND 2)</scope>
    <source>
        <tissue>Mammary cancer</tissue>
    </source>
</reference>
<reference key="4">
    <citation type="journal article" date="2007" name="Biochem. Biophys. Res. Commun.">
        <title>TRAF-interacting protein (TRIP) is a RING-dependent ubiquitin ligase.</title>
        <authorList>
            <person name="Besse A."/>
            <person name="Campos A.D."/>
            <person name="Webster W.K."/>
            <person name="Darnay B.G."/>
        </authorList>
    </citation>
    <scope>FUNCTION</scope>
    <scope>AUTOUBIQUITINATION</scope>
    <scope>MUTAGENESIS OF CYS-7</scope>
    <scope>INTERACTION WITH TRAF1; TRAF2; TRAF3; TRAF5 AND TRAF6</scope>
</reference>
<reference key="5">
    <citation type="journal article" date="2007" name="Biochem. Biophys. Res. Commun.">
        <title>Early embryonic lethality caused by targeted disruption of the TRAF-interacting protein (TRIP) gene.</title>
        <authorList>
            <person name="Park E.S."/>
            <person name="Choi S."/>
            <person name="Kim J.M."/>
            <person name="Jeong Y."/>
            <person name="Choe J."/>
            <person name="Park C.S."/>
            <person name="Choi Y."/>
            <person name="Rho J."/>
        </authorList>
    </citation>
    <scope>DISRUPTION PHENOTYPE</scope>
</reference>
<reference key="6">
    <citation type="journal article" date="2012" name="J. Exp. Med.">
        <title>TRAF-interacting protein (TRIP) negatively regulates IFN-beta production and antiviral response by promoting proteasomal degradation of TANK-binding kinase 1.</title>
        <authorList>
            <person name="Zhang M."/>
            <person name="Wang L."/>
            <person name="Zhao X."/>
            <person name="Zhao K."/>
            <person name="Meng H."/>
            <person name="Zhao W."/>
            <person name="Gao C."/>
        </authorList>
    </citation>
    <scope>FUNCTION</scope>
    <scope>DISRUPTION PHENOTYPE</scope>
</reference>
<reference key="7">
    <citation type="journal article" date="2016" name="Sci. Rep.">
        <title>TRAIP is involved in chromosome alignment and SAC regulation in mouse oocyte meiosis.</title>
        <authorList>
            <person name="Yuan Y.F."/>
            <person name="Ren Y.X."/>
            <person name="Yuan P."/>
            <person name="Yan L.Y."/>
            <person name="Qiao J."/>
        </authorList>
    </citation>
    <scope>SUBCELLULAR LOCATION</scope>
    <scope>DEVELOPMENTAL STAGE</scope>
</reference>
<reference key="8">
    <citation type="journal article" date="2021" name="EMBO Rep.">
        <title>CUL2LRR1, TRAIP and p97 control CMG helicase disassembly in the mammalian cell cycle.</title>
        <authorList>
            <person name="Villa F."/>
            <person name="Fujisawa R."/>
            <person name="Ainsworth J."/>
            <person name="Nishimura K."/>
            <person name="Lie-A-Ling M."/>
            <person name="Lacaud G."/>
            <person name="Labib K.P."/>
        </authorList>
    </citation>
    <scope>FUNCTION</scope>
    <scope>SUBCELLULAR LOCATION</scope>
</reference>
<protein>
    <recommendedName>
        <fullName evidence="14">E3 ubiquitin-protein ligase TRAIP</fullName>
        <ecNumber evidence="5 7">2.3.2.27</ecNumber>
    </recommendedName>
    <alternativeName>
        <fullName evidence="13">TRAF-interacting protein</fullName>
    </alternativeName>
</protein>
<proteinExistence type="evidence at protein level"/>
<comment type="function">
    <text evidence="1 2 5 7 9">E3 ubiquitin ligase required to protect genome stability in response to replication stress (PubMed:33590678). Acts as a key regulator of interstrand cross-link repair, which takes place when both strands of duplex DNA are covalently tethered together, thereby blocking replication and transcription (By similarity). During mitosis, controls the choice between the two pathways of replication-coupled interstrand-cross-link repair by mediating ubiquitination of MCM7 subunit of the CMG helicase complex (PubMed:33590678). Short ubiquitin chains on MCM7 promote recruitment of DNA glycosylase NEIL3 (By similarity). If the interstrand cross-link cannot be cleaved by NEIL3, the ubiquitin chains continue to grow on MCM7, promoting the unloading of the CMG helicase complex by the VCP/p97 ATPase, enabling the Fanconi anemia DNA repair pathway (By similarity). Only catalyzes ubiquitination of MCM7 when forks converge (By similarity). Also involved in the repair of covalent DNA-protein cross-links (DPCs) during DNA synthesis: promotes ubiquitination of DPCs, leading to their degradation by the proteasome (By similarity). Has also been proposed to play a role in promoting translesion synthesis by mediating the assembly of 'Lys-63'-linked poly-ubiquitin chains on the Y-family polymerase POLN in order to facilitate bypass of DNA lesions and preserve genomic integrity (By similarity). The function in translesion synthesis is however controversial (By similarity). Acts as a regulator of the spindle assembly checkpoint (By similarity). Also acts as a negative regulator of innate immune signaling by inhibiting activation of NF-kappa-B mediated by TNF (PubMed:17544371, PubMed:22945920). Negatively regulates TLR3/4- and RIG-I-mediated IRF3 activation and subsequent IFNB1 production and cellular antiviral response by promoting 'Lys-48'-linked polyubiquitination of TNK1 leading to its proteasomal degradation (By similarity).</text>
</comment>
<comment type="catalytic activity">
    <reaction evidence="5 7">
        <text>S-ubiquitinyl-[E2 ubiquitin-conjugating enzyme]-L-cysteine + [acceptor protein]-L-lysine = [E2 ubiquitin-conjugating enzyme]-L-cysteine + N(6)-ubiquitinyl-[acceptor protein]-L-lysine.</text>
        <dbReference type="EC" id="2.3.2.27"/>
    </reaction>
</comment>
<comment type="pathway">
    <text evidence="5 7">Protein modification; protein ubiquitination.</text>
</comment>
<comment type="subunit">
    <text evidence="2 5 10">Interacts (via PIP-box) with PCNA (By similarity). Binds TRAF1, TRAF2, TRAF3, TRAF5 and TRAF6 is part of the receptor-TRAF signaling complex (PubMed:17544371, PubMed:9104814). May interact with CYLD; the C-terminus interacts with CYLD, however the interaction was not detected with the full-length protein (By similarity). Interacts with POLK and POLN (By similarity). Interacts with UIMC1 (By similarity).</text>
</comment>
<comment type="subcellular location">
    <subcellularLocation>
        <location evidence="2">Nucleus</location>
        <location evidence="2">Nucleoplasm</location>
    </subcellularLocation>
    <subcellularLocation>
        <location evidence="2">Nucleus</location>
        <location evidence="2">Nucleolus</location>
    </subcellularLocation>
    <subcellularLocation>
        <location evidence="8 9">Chromosome</location>
    </subcellularLocation>
    <subcellularLocation>
        <location evidence="2">Cytoplasm</location>
    </subcellularLocation>
    <subcellularLocation>
        <location evidence="2">Cytoplasm</location>
        <location evidence="2">Perinuclear region</location>
    </subcellularLocation>
    <text evidence="2 9">In the nucleus, found in close proximity to PCNA, suggesting localization at replication foci (PubMed:33590678). Localizes to DNA damage sites in response to replication stress (By similarity).</text>
</comment>
<comment type="alternative products">
    <event type="alternative splicing"/>
    <isoform>
        <id>Q8VIG6-1</id>
        <name>1</name>
        <sequence type="displayed"/>
    </isoform>
    <isoform>
        <id>Q8VIG6-2</id>
        <name>2</name>
        <sequence type="described" ref="VSP_007406 VSP_007407"/>
    </isoform>
</comment>
<comment type="tissue specificity">
    <text evidence="10">Detected in testis and thymus, and at lower levels in spleen.</text>
</comment>
<comment type="developmental stage">
    <text evidence="8">Expressed during oocytes meiosis.</text>
</comment>
<comment type="PTM">
    <text evidence="5">Autoubiquitinated.</text>
</comment>
<comment type="PTM">
    <text evidence="2">Sumoylated; sumoylation is required for nuclear localization. Sumoylation increases protein stability, possibly by preventing ubiquitination.</text>
</comment>
<comment type="disruption phenotype">
    <text evidence="6 7">Early embryonic lethality due to proliferation defects and excessive cell death (PubMed:17927961). TRAIP knockdown substantially increases LPS- and poly(I:C)-induced IFN-production in mouse peritoneal macrophages at both mRNA and protein levels (PubMed:22945920).</text>
</comment>
<comment type="similarity">
    <text evidence="14">Belongs to the TRAIP family.</text>
</comment>
<dbReference type="EC" id="2.3.2.27" evidence="5 7"/>
<dbReference type="EMBL" id="U77844">
    <property type="protein sequence ID" value="AAB52994.1"/>
    <property type="molecule type" value="mRNA"/>
</dbReference>
<dbReference type="EMBL" id="AK012786">
    <property type="protein sequence ID" value="BAB28469.1"/>
    <property type="molecule type" value="mRNA"/>
</dbReference>
<dbReference type="EMBL" id="AK012948">
    <property type="protein sequence ID" value="BAB28567.1"/>
    <property type="molecule type" value="mRNA"/>
</dbReference>
<dbReference type="EMBL" id="BC006929">
    <property type="protein sequence ID" value="AAH06929.1"/>
    <property type="molecule type" value="mRNA"/>
</dbReference>
<dbReference type="EMBL" id="BC017374">
    <property type="protein sequence ID" value="AAH17374.1"/>
    <property type="molecule type" value="mRNA"/>
</dbReference>
<dbReference type="CCDS" id="CCDS23511.1">
    <molecule id="Q8VIG6-1"/>
</dbReference>
<dbReference type="RefSeq" id="NP_035764.2">
    <molecule id="Q8VIG6-1"/>
    <property type="nucleotide sequence ID" value="NM_011634.3"/>
</dbReference>
<dbReference type="SMR" id="Q8VIG6"/>
<dbReference type="BioGRID" id="204309">
    <property type="interactions" value="38"/>
</dbReference>
<dbReference type="FunCoup" id="Q8VIG6">
    <property type="interactions" value="2324"/>
</dbReference>
<dbReference type="STRING" id="10090.ENSMUSP00000040001"/>
<dbReference type="iPTMnet" id="Q8VIG6"/>
<dbReference type="PhosphoSitePlus" id="Q8VIG6"/>
<dbReference type="jPOST" id="Q8VIG6"/>
<dbReference type="PaxDb" id="10090-ENSMUSP00000040001"/>
<dbReference type="ProteomicsDB" id="298283">
    <molecule id="Q8VIG6-1"/>
</dbReference>
<dbReference type="ProteomicsDB" id="298284">
    <molecule id="Q8VIG6-2"/>
</dbReference>
<dbReference type="Antibodypedia" id="30670">
    <property type="antibodies" value="309 antibodies from 31 providers"/>
</dbReference>
<dbReference type="DNASU" id="22036"/>
<dbReference type="Ensembl" id="ENSMUST00000049348.9">
    <molecule id="Q8VIG6-1"/>
    <property type="protein sequence ID" value="ENSMUSP00000040001.4"/>
    <property type="gene ID" value="ENSMUSG00000032586.10"/>
</dbReference>
<dbReference type="GeneID" id="22036"/>
<dbReference type="KEGG" id="mmu:22036"/>
<dbReference type="UCSC" id="uc009rnn.1">
    <molecule id="Q8VIG6-1"/>
    <property type="organism name" value="mouse"/>
</dbReference>
<dbReference type="AGR" id="MGI:1096377"/>
<dbReference type="CTD" id="10293"/>
<dbReference type="MGI" id="MGI:1096377">
    <property type="gene designation" value="Traip"/>
</dbReference>
<dbReference type="VEuPathDB" id="HostDB:ENSMUSG00000032586"/>
<dbReference type="eggNOG" id="KOG0827">
    <property type="taxonomic scope" value="Eukaryota"/>
</dbReference>
<dbReference type="GeneTree" id="ENSGT00390000007696"/>
<dbReference type="HOGENOM" id="CLU_046426_0_0_1"/>
<dbReference type="InParanoid" id="Q8VIG6"/>
<dbReference type="OMA" id="RSKYIQP"/>
<dbReference type="OrthoDB" id="8062037at2759"/>
<dbReference type="PhylomeDB" id="Q8VIG6"/>
<dbReference type="TreeFam" id="TF317309"/>
<dbReference type="Reactome" id="R-MMU-983168">
    <property type="pathway name" value="Antigen processing: Ubiquitination &amp; Proteasome degradation"/>
</dbReference>
<dbReference type="UniPathway" id="UPA00143"/>
<dbReference type="BioGRID-ORCS" id="22036">
    <property type="hits" value="26 hits in 78 CRISPR screens"/>
</dbReference>
<dbReference type="ChiTaRS" id="Traip">
    <property type="organism name" value="mouse"/>
</dbReference>
<dbReference type="PRO" id="PR:Q8VIG6"/>
<dbReference type="Proteomes" id="UP000000589">
    <property type="component" value="Chromosome 9"/>
</dbReference>
<dbReference type="RNAct" id="Q8VIG6">
    <property type="molecule type" value="protein"/>
</dbReference>
<dbReference type="Bgee" id="ENSMUSG00000032586">
    <property type="expression patterns" value="Expressed in embryonic post-anal tail and 187 other cell types or tissues"/>
</dbReference>
<dbReference type="ExpressionAtlas" id="Q8VIG6">
    <property type="expression patterns" value="baseline and differential"/>
</dbReference>
<dbReference type="GO" id="GO:0005730">
    <property type="term" value="C:nucleolus"/>
    <property type="evidence" value="ECO:0000250"/>
    <property type="project" value="UniProtKB"/>
</dbReference>
<dbReference type="GO" id="GO:0005654">
    <property type="term" value="C:nucleoplasm"/>
    <property type="evidence" value="ECO:0000250"/>
    <property type="project" value="UniProtKB"/>
</dbReference>
<dbReference type="GO" id="GO:0048471">
    <property type="term" value="C:perinuclear region of cytoplasm"/>
    <property type="evidence" value="ECO:0007669"/>
    <property type="project" value="UniProtKB-SubCell"/>
</dbReference>
<dbReference type="GO" id="GO:0090734">
    <property type="term" value="C:site of DNA damage"/>
    <property type="evidence" value="ECO:0000250"/>
    <property type="project" value="UniProtKB"/>
</dbReference>
<dbReference type="GO" id="GO:0042802">
    <property type="term" value="F:identical protein binding"/>
    <property type="evidence" value="ECO:0007669"/>
    <property type="project" value="Ensembl"/>
</dbReference>
<dbReference type="GO" id="GO:0061630">
    <property type="term" value="F:ubiquitin protein ligase activity"/>
    <property type="evidence" value="ECO:0000314"/>
    <property type="project" value="MGI"/>
</dbReference>
<dbReference type="GO" id="GO:0004842">
    <property type="term" value="F:ubiquitin-protein transferase activity"/>
    <property type="evidence" value="ECO:0000314"/>
    <property type="project" value="FlyBase"/>
</dbReference>
<dbReference type="GO" id="GO:0008270">
    <property type="term" value="F:zinc ion binding"/>
    <property type="evidence" value="ECO:0007669"/>
    <property type="project" value="UniProtKB-KW"/>
</dbReference>
<dbReference type="GO" id="GO:0006974">
    <property type="term" value="P:DNA damage response"/>
    <property type="evidence" value="ECO:0000250"/>
    <property type="project" value="UniProtKB"/>
</dbReference>
<dbReference type="GO" id="GO:0032688">
    <property type="term" value="P:negative regulation of interferon-beta production"/>
    <property type="evidence" value="ECO:0000314"/>
    <property type="project" value="CACAO"/>
</dbReference>
<dbReference type="GO" id="GO:0010804">
    <property type="term" value="P:negative regulation of tumor necrosis factor-mediated signaling pathway"/>
    <property type="evidence" value="ECO:0007669"/>
    <property type="project" value="Ensembl"/>
</dbReference>
<dbReference type="GO" id="GO:0016567">
    <property type="term" value="P:protein ubiquitination"/>
    <property type="evidence" value="ECO:0000314"/>
    <property type="project" value="FlyBase"/>
</dbReference>
<dbReference type="GO" id="GO:0106300">
    <property type="term" value="P:protein-DNA covalent cross-linking repair"/>
    <property type="evidence" value="ECO:0000250"/>
    <property type="project" value="UniProtKB"/>
</dbReference>
<dbReference type="GO" id="GO:0031297">
    <property type="term" value="P:replication fork processing"/>
    <property type="evidence" value="ECO:0000250"/>
    <property type="project" value="UniProtKB"/>
</dbReference>
<dbReference type="GO" id="GO:0007165">
    <property type="term" value="P:signal transduction"/>
    <property type="evidence" value="ECO:0000314"/>
    <property type="project" value="MGI"/>
</dbReference>
<dbReference type="CDD" id="cd16480">
    <property type="entry name" value="RING-H2_TRAIP"/>
    <property type="match status" value="1"/>
</dbReference>
<dbReference type="FunFam" id="3.30.40.10:FF:000431">
    <property type="entry name" value="E3 ubiquitin-protein ligase TRAIP"/>
    <property type="match status" value="1"/>
</dbReference>
<dbReference type="Gene3D" id="3.30.40.10">
    <property type="entry name" value="Zinc/RING finger domain, C3HC4 (zinc finger)"/>
    <property type="match status" value="1"/>
</dbReference>
<dbReference type="InterPro" id="IPR052639">
    <property type="entry name" value="TRAIP_ubiq-protein_ligase"/>
</dbReference>
<dbReference type="InterPro" id="IPR001841">
    <property type="entry name" value="Znf_RING"/>
</dbReference>
<dbReference type="InterPro" id="IPR013083">
    <property type="entry name" value="Znf_RING/FYVE/PHD"/>
</dbReference>
<dbReference type="PANTHER" id="PTHR46569:SF1">
    <property type="entry name" value="E3 UBIQUITIN-PROTEIN LIGASE RFWD3-RELATED"/>
    <property type="match status" value="1"/>
</dbReference>
<dbReference type="PANTHER" id="PTHR46569">
    <property type="entry name" value="E3 UBIQUITIN-PROTEIN LIGASE TRAIP"/>
    <property type="match status" value="1"/>
</dbReference>
<dbReference type="Pfam" id="PF13639">
    <property type="entry name" value="zf-RING_2"/>
    <property type="match status" value="1"/>
</dbReference>
<dbReference type="SMART" id="SM00184">
    <property type="entry name" value="RING"/>
    <property type="match status" value="1"/>
</dbReference>
<dbReference type="SUPFAM" id="SSF46579">
    <property type="entry name" value="Prefoldin"/>
    <property type="match status" value="1"/>
</dbReference>
<dbReference type="SUPFAM" id="SSF57850">
    <property type="entry name" value="RING/U-box"/>
    <property type="match status" value="1"/>
</dbReference>
<dbReference type="PROSITE" id="PS50089">
    <property type="entry name" value="ZF_RING_2"/>
    <property type="match status" value="1"/>
</dbReference>
<name>TRAIP_MOUSE</name>
<evidence type="ECO:0000250" key="1">
    <source>
        <dbReference type="UniProtKB" id="Q6NRV0"/>
    </source>
</evidence>
<evidence type="ECO:0000250" key="2">
    <source>
        <dbReference type="UniProtKB" id="Q9BWF2"/>
    </source>
</evidence>
<evidence type="ECO:0000255" key="3"/>
<evidence type="ECO:0000255" key="4">
    <source>
        <dbReference type="PROSITE-ProRule" id="PRU00175"/>
    </source>
</evidence>
<evidence type="ECO:0000269" key="5">
    <source>
    </source>
</evidence>
<evidence type="ECO:0000269" key="6">
    <source>
    </source>
</evidence>
<evidence type="ECO:0000269" key="7">
    <source>
    </source>
</evidence>
<evidence type="ECO:0000269" key="8">
    <source>
    </source>
</evidence>
<evidence type="ECO:0000269" key="9">
    <source>
    </source>
</evidence>
<evidence type="ECO:0000269" key="10">
    <source>
    </source>
</evidence>
<evidence type="ECO:0000303" key="11">
    <source>
    </source>
</evidence>
<evidence type="ECO:0000303" key="12">
    <source>
    </source>
</evidence>
<evidence type="ECO:0000303" key="13">
    <source>
    </source>
</evidence>
<evidence type="ECO:0000305" key="14"/>
<evidence type="ECO:0000312" key="15">
    <source>
        <dbReference type="MGI" id="MGI:1096377"/>
    </source>
</evidence>
<gene>
    <name evidence="12 15" type="primary">Traip</name>
    <name evidence="13" type="synonym">Trip</name>
</gene>
<keyword id="KW-0025">Alternative splicing</keyword>
<keyword id="KW-0158">Chromosome</keyword>
<keyword id="KW-0175">Coiled coil</keyword>
<keyword id="KW-0963">Cytoplasm</keyword>
<keyword id="KW-0227">DNA damage</keyword>
<keyword id="KW-0234">DNA repair</keyword>
<keyword id="KW-0479">Metal-binding</keyword>
<keyword id="KW-0539">Nucleus</keyword>
<keyword id="KW-1185">Reference proteome</keyword>
<keyword id="KW-0677">Repeat</keyword>
<keyword id="KW-0808">Transferase</keyword>
<keyword id="KW-0832">Ubl conjugation</keyword>
<keyword id="KW-0833">Ubl conjugation pathway</keyword>
<keyword id="KW-0862">Zinc</keyword>
<keyword id="KW-0863">Zinc-finger</keyword>
<accession>Q8VIG6</accession>
<accession>O08854</accession>
<accession>Q922M8</accession>
<accession>Q9CPP4</accession>
<organism>
    <name type="scientific">Mus musculus</name>
    <name type="common">Mouse</name>
    <dbReference type="NCBI Taxonomy" id="10090"/>
    <lineage>
        <taxon>Eukaryota</taxon>
        <taxon>Metazoa</taxon>
        <taxon>Chordata</taxon>
        <taxon>Craniata</taxon>
        <taxon>Vertebrata</taxon>
        <taxon>Euteleostomi</taxon>
        <taxon>Mammalia</taxon>
        <taxon>Eutheria</taxon>
        <taxon>Euarchontoglires</taxon>
        <taxon>Glires</taxon>
        <taxon>Rodentia</taxon>
        <taxon>Myomorpha</taxon>
        <taxon>Muroidea</taxon>
        <taxon>Muridae</taxon>
        <taxon>Murinae</taxon>
        <taxon>Mus</taxon>
        <taxon>Mus</taxon>
    </lineage>
</organism>
<sequence length="470" mass="53149">MPIRALCTICSDFFDHSRDVAAIHCGHTFHLQCLIQWFETAPSRTCPQCRIQVGKKTIINKLFFDLAQEEENVLDAEFLKNELDSVKAQLSQKDREKRDSQAIIDTLRDTLEERNATVESLQNALNKAEMLCSTLKKQMKFLEQRQDETKQAREEAHRLKCKMKTMEQIELLLQSQRSEVEEMIRDMGVGQSAVEQLAVYCVSLKKEYENLKEARKATGELADRLKKDLVSSRSKLKTLNTELDQAKLELRSAQKDLQSADQEITSLRKKLMILQGTLSLPPATNETVSRLVFESPAPVEMMNPRLHQPPFGDEIDLNTTFDVNTPPTQTSGSQHCLPKKLCLERARSPMQNVLKKVHKVSKPESQLSLGGQRCVGELDEELAGAFPLFIRNAVLGQKQPNRTTAESRCSTDVVRIGFDGLGGRTKFIQPRDTTIIRPVPVKSKAKSKQKVRIKTVSSASQPKLDTFLCQ</sequence>
<feature type="chain" id="PRO_0000056192" description="E3 ubiquitin-protein ligase TRAIP">
    <location>
        <begin position="1"/>
        <end position="470"/>
    </location>
</feature>
<feature type="zinc finger region" description="RING-type; atypical" evidence="4">
    <location>
        <begin position="7"/>
        <end position="50"/>
    </location>
</feature>
<feature type="region of interest" description="Interaction with CYLD" evidence="2">
    <location>
        <begin position="211"/>
        <end position="470"/>
    </location>
</feature>
<feature type="coiled-coil region" evidence="3">
    <location>
        <begin position="76"/>
        <end position="277"/>
    </location>
</feature>
<feature type="short sequence motif" description="PIP-box" evidence="2">
    <location>
        <begin position="461"/>
        <end position="470"/>
    </location>
</feature>
<feature type="splice variant" id="VSP_007406" description="In isoform 2." evidence="11">
    <original>EYENLKEARKATGELAD</original>
    <variation>CVSSGVPLPSSFVMQIL</variation>
    <location>
        <begin position="207"/>
        <end position="223"/>
    </location>
</feature>
<feature type="splice variant" id="VSP_007407" description="In isoform 2." evidence="11">
    <location>
        <begin position="224"/>
        <end position="470"/>
    </location>
</feature>
<feature type="mutagenesis site" description="Fails to autoubiquitinate." evidence="5">
    <original>C</original>
    <variation>A</variation>
    <location>
        <position position="7"/>
    </location>
</feature>
<feature type="sequence conflict" description="In Ref. 1; AAB52994." evidence="14" ref="1">
    <original>RA</original>
    <variation>LS</variation>
    <location>
        <begin position="4"/>
        <end position="5"/>
    </location>
</feature>
<feature type="sequence conflict" description="In Ref. 3; AAH17374." evidence="14" ref="3">
    <original>T</original>
    <variation>M</variation>
    <location>
        <position position="265"/>
    </location>
</feature>
<feature type="sequence conflict" description="In Ref. 1; AAB52994." evidence="14" ref="1">
    <original>A</original>
    <variation>R</variation>
    <location>
        <position position="283"/>
    </location>
</feature>
<feature type="sequence conflict" description="In Ref. 1; AAB52994." evidence="14" ref="1">
    <original>C</original>
    <variation>S</variation>
    <location>
        <position position="409"/>
    </location>
</feature>